<sequence>MTEENNNTAATVTDQTEHSNIITIQTTLGDEDEDIHKCGKCLAEFSALDAFIQHKLSRSCKRTQDPQTNVVPNEGVSVEVRSSENECSSDETATANGEKQDAKVASGDKKRSRSTSEDESSSPSKVVWKLNTEGRYVCDICAKTFKTTNILRTHMFTHSDQKNFVCEMCETAFRTKGSLIRHKRRHTDERPYRCNQCGLAFRESGALTRHLKSLTPCTEKIRYSQCKEILVSKDGIRKEVQPSSPEPEKEQIPVVRVVEAGQEIIQIEVVEEVQQVASQPQTATVVEADNLICQAIINSGIALETEATEAAGQVEAQSPKAVLGAPETETRITEIQVTEECVETLAEETQDSSVKEVEPVQSKLYKCPHCERMFKTLNYLRVHVKGHVGYKPFKCLTCQKEFLTGYVLKKHMETHVSERRYKCGECGKQFKAIGHVREHMRAHSDERPYHCSFCDKSYKTKNALQVHHRTHADDKPYVCQHCSRGFREKSALVRHIRHHTGEKPFKCSKCGRGFAEHGTLNRHLRAKGGCFAQLKDCEHVVNSEEQEVTTESVSTTIVSDDPHAVLVEFSSVVADTQEYIIGAPAEEAAQGEEVAIIQDNQQQMDSHIMKVVQQIVSQSHGGHQIIVRNVTADETPGISDSGDTITIATPESLTEQVAMTLANAISDGTILTTTTEDTDETSHTTVTMVTAENVETIEQEEQYVIASPEEVEIQTVVVV</sequence>
<gene>
    <name type="primary">e4f1</name>
    <name type="ORF">zgc:114190</name>
</gene>
<evidence type="ECO:0000250" key="1"/>
<evidence type="ECO:0000250" key="2">
    <source>
        <dbReference type="UniProtKB" id="Q66K89"/>
    </source>
</evidence>
<evidence type="ECO:0000255" key="3">
    <source>
        <dbReference type="PROSITE-ProRule" id="PRU00042"/>
    </source>
</evidence>
<evidence type="ECO:0000256" key="4">
    <source>
        <dbReference type="SAM" id="MobiDB-lite"/>
    </source>
</evidence>
<evidence type="ECO:0000305" key="5"/>
<comment type="function">
    <text evidence="2">May function as a transcriptional repressor. May also function as a ubiquitin ligase. Functions in cell survival and proliferation through control of the cell cycle.</text>
</comment>
<comment type="catalytic activity">
    <reaction evidence="2">
        <text>S-ubiquitinyl-[E2 ubiquitin-conjugating enzyme]-L-cysteine + [acceptor protein]-L-lysine = [E2 ubiquitin-conjugating enzyme]-L-cysteine + N(6)-ubiquitinyl-[acceptor protein]-L-lysine.</text>
        <dbReference type="EC" id="2.3.2.27"/>
    </reaction>
</comment>
<comment type="pathway">
    <text>Protein modification; protein ubiquitination.</text>
</comment>
<comment type="subcellular location">
    <subcellularLocation>
        <location evidence="1">Nucleus</location>
        <location evidence="1">Nucleoplasm</location>
    </subcellularLocation>
    <subcellularLocation>
        <location evidence="1">Cytoplasm</location>
    </subcellularLocation>
    <text evidence="1">A small fraction is detected in the cytoplasm.</text>
</comment>
<organism>
    <name type="scientific">Danio rerio</name>
    <name type="common">Zebrafish</name>
    <name type="synonym">Brachydanio rerio</name>
    <dbReference type="NCBI Taxonomy" id="7955"/>
    <lineage>
        <taxon>Eukaryota</taxon>
        <taxon>Metazoa</taxon>
        <taxon>Chordata</taxon>
        <taxon>Craniata</taxon>
        <taxon>Vertebrata</taxon>
        <taxon>Euteleostomi</taxon>
        <taxon>Actinopterygii</taxon>
        <taxon>Neopterygii</taxon>
        <taxon>Teleostei</taxon>
        <taxon>Ostariophysi</taxon>
        <taxon>Cypriniformes</taxon>
        <taxon>Danionidae</taxon>
        <taxon>Danioninae</taxon>
        <taxon>Danio</taxon>
    </lineage>
</organism>
<feature type="chain" id="PRO_0000324309" description="Transcription factor E4F1">
    <location>
        <begin position="1"/>
        <end position="719"/>
    </location>
</feature>
<feature type="zinc finger region" description="C2H2-type 1" evidence="3">
    <location>
        <begin position="136"/>
        <end position="158"/>
    </location>
</feature>
<feature type="zinc finger region" description="C2H2-type 2" evidence="3">
    <location>
        <begin position="164"/>
        <end position="186"/>
    </location>
</feature>
<feature type="zinc finger region" description="C2H2-type 3; degenerate" evidence="3">
    <location>
        <begin position="192"/>
        <end position="216"/>
    </location>
</feature>
<feature type="zinc finger region" description="C2H2-type 4" evidence="3">
    <location>
        <begin position="365"/>
        <end position="387"/>
    </location>
</feature>
<feature type="zinc finger region" description="C2H2-type 5" evidence="3">
    <location>
        <begin position="393"/>
        <end position="415"/>
    </location>
</feature>
<feature type="zinc finger region" description="C2H2-type 6" evidence="3">
    <location>
        <begin position="421"/>
        <end position="443"/>
    </location>
</feature>
<feature type="zinc finger region" description="C2H2-type 7" evidence="3">
    <location>
        <begin position="449"/>
        <end position="471"/>
    </location>
</feature>
<feature type="zinc finger region" description="C2H2-type 8" evidence="3">
    <location>
        <begin position="477"/>
        <end position="499"/>
    </location>
</feature>
<feature type="zinc finger region" description="C2H2-type 9; degenerate" evidence="3">
    <location>
        <begin position="505"/>
        <end position="527"/>
    </location>
</feature>
<feature type="region of interest" description="Required for ubiquitin ligase activity" evidence="1">
    <location>
        <begin position="20"/>
        <end position="63"/>
    </location>
</feature>
<feature type="region of interest" description="Disordered" evidence="4">
    <location>
        <begin position="59"/>
        <end position="125"/>
    </location>
</feature>
<feature type="region of interest" description="Mediates dimerization and DNA-binding" evidence="1">
    <location>
        <begin position="128"/>
        <end position="207"/>
    </location>
</feature>
<feature type="compositionally biased region" description="Basic and acidic residues" evidence="4">
    <location>
        <begin position="98"/>
        <end position="109"/>
    </location>
</feature>
<dbReference type="EC" id="2.3.2.27" evidence="2"/>
<dbReference type="EMBL" id="BC097238">
    <property type="protein sequence ID" value="AAH97238.1"/>
    <property type="molecule type" value="mRNA"/>
</dbReference>
<dbReference type="RefSeq" id="NP_001020684.1">
    <property type="nucleotide sequence ID" value="NM_001025513.1"/>
</dbReference>
<dbReference type="SMR" id="Q4V8R6"/>
<dbReference type="BioGRID" id="287308">
    <property type="interactions" value="2"/>
</dbReference>
<dbReference type="FunCoup" id="Q4V8R6">
    <property type="interactions" value="2205"/>
</dbReference>
<dbReference type="STRING" id="7955.ENSDARP00000055766"/>
<dbReference type="PaxDb" id="7955-ENSDARP00000055766"/>
<dbReference type="GeneID" id="561158"/>
<dbReference type="KEGG" id="dre:561158"/>
<dbReference type="AGR" id="ZFIN:ZDB-GENE-050913-103"/>
<dbReference type="CTD" id="1877"/>
<dbReference type="ZFIN" id="ZDB-GENE-050913-103">
    <property type="gene designation" value="e4f1"/>
</dbReference>
<dbReference type="eggNOG" id="KOG1721">
    <property type="taxonomic scope" value="Eukaryota"/>
</dbReference>
<dbReference type="InParanoid" id="Q4V8R6"/>
<dbReference type="OrthoDB" id="4748970at2759"/>
<dbReference type="PhylomeDB" id="Q4V8R6"/>
<dbReference type="UniPathway" id="UPA00143"/>
<dbReference type="PRO" id="PR:Q4V8R6"/>
<dbReference type="Proteomes" id="UP000000437">
    <property type="component" value="Chromosome 3"/>
</dbReference>
<dbReference type="GO" id="GO:0005737">
    <property type="term" value="C:cytoplasm"/>
    <property type="evidence" value="ECO:0007669"/>
    <property type="project" value="UniProtKB-SubCell"/>
</dbReference>
<dbReference type="GO" id="GO:0005654">
    <property type="term" value="C:nucleoplasm"/>
    <property type="evidence" value="ECO:0000318"/>
    <property type="project" value="GO_Central"/>
</dbReference>
<dbReference type="GO" id="GO:0001227">
    <property type="term" value="F:DNA-binding transcription repressor activity, RNA polymerase II-specific"/>
    <property type="evidence" value="ECO:0000318"/>
    <property type="project" value="GO_Central"/>
</dbReference>
<dbReference type="GO" id="GO:0000978">
    <property type="term" value="F:RNA polymerase II cis-regulatory region sequence-specific DNA binding"/>
    <property type="evidence" value="ECO:0000318"/>
    <property type="project" value="GO_Central"/>
</dbReference>
<dbReference type="GO" id="GO:0016740">
    <property type="term" value="F:transferase activity"/>
    <property type="evidence" value="ECO:0007669"/>
    <property type="project" value="UniProtKB-KW"/>
</dbReference>
<dbReference type="GO" id="GO:0008270">
    <property type="term" value="F:zinc ion binding"/>
    <property type="evidence" value="ECO:0007669"/>
    <property type="project" value="UniProtKB-KW"/>
</dbReference>
<dbReference type="GO" id="GO:0051301">
    <property type="term" value="P:cell division"/>
    <property type="evidence" value="ECO:0007669"/>
    <property type="project" value="UniProtKB-KW"/>
</dbReference>
<dbReference type="GO" id="GO:0000122">
    <property type="term" value="P:negative regulation of transcription by RNA polymerase II"/>
    <property type="evidence" value="ECO:0000318"/>
    <property type="project" value="GO_Central"/>
</dbReference>
<dbReference type="GO" id="GO:0016567">
    <property type="term" value="P:protein ubiquitination"/>
    <property type="evidence" value="ECO:0007669"/>
    <property type="project" value="UniProtKB-UniPathway"/>
</dbReference>
<dbReference type="GO" id="GO:0001817">
    <property type="term" value="P:regulation of cytokine production"/>
    <property type="evidence" value="ECO:0000318"/>
    <property type="project" value="GO_Central"/>
</dbReference>
<dbReference type="GO" id="GO:0002682">
    <property type="term" value="P:regulation of immune system process"/>
    <property type="evidence" value="ECO:0000318"/>
    <property type="project" value="GO_Central"/>
</dbReference>
<dbReference type="FunFam" id="3.30.160.60:FF:000012">
    <property type="entry name" value="RB-associated KRAB zinc finger protein-like"/>
    <property type="match status" value="1"/>
</dbReference>
<dbReference type="FunFam" id="3.30.160.60:FF:001557">
    <property type="entry name" value="Transcription factor E4F1"/>
    <property type="match status" value="1"/>
</dbReference>
<dbReference type="FunFam" id="3.30.160.60:FF:000702">
    <property type="entry name" value="Transcription factor E4F1 isoform 1"/>
    <property type="match status" value="1"/>
</dbReference>
<dbReference type="FunFam" id="3.30.160.60:FF:000446">
    <property type="entry name" value="Zinc finger protein"/>
    <property type="match status" value="1"/>
</dbReference>
<dbReference type="FunFam" id="3.30.160.60:FF:000145">
    <property type="entry name" value="Zinc finger protein 574"/>
    <property type="match status" value="1"/>
</dbReference>
<dbReference type="FunFam" id="3.30.160.60:FF:000710">
    <property type="entry name" value="Zinc finger protein 768"/>
    <property type="match status" value="1"/>
</dbReference>
<dbReference type="Gene3D" id="3.30.160.60">
    <property type="entry name" value="Classic Zinc Finger"/>
    <property type="match status" value="8"/>
</dbReference>
<dbReference type="InterPro" id="IPR050331">
    <property type="entry name" value="Zinc_finger"/>
</dbReference>
<dbReference type="InterPro" id="IPR036236">
    <property type="entry name" value="Znf_C2H2_sf"/>
</dbReference>
<dbReference type="InterPro" id="IPR013087">
    <property type="entry name" value="Znf_C2H2_type"/>
</dbReference>
<dbReference type="PANTHER" id="PTHR16515:SF49">
    <property type="entry name" value="GASTRULA ZINC FINGER PROTEIN XLCGF49.1-LIKE-RELATED"/>
    <property type="match status" value="1"/>
</dbReference>
<dbReference type="PANTHER" id="PTHR16515">
    <property type="entry name" value="PR DOMAIN ZINC FINGER PROTEIN"/>
    <property type="match status" value="1"/>
</dbReference>
<dbReference type="Pfam" id="PF00096">
    <property type="entry name" value="zf-C2H2"/>
    <property type="match status" value="7"/>
</dbReference>
<dbReference type="Pfam" id="PF13912">
    <property type="entry name" value="zf-C2H2_6"/>
    <property type="match status" value="2"/>
</dbReference>
<dbReference type="SMART" id="SM00355">
    <property type="entry name" value="ZnF_C2H2"/>
    <property type="match status" value="10"/>
</dbReference>
<dbReference type="SUPFAM" id="SSF57667">
    <property type="entry name" value="beta-beta-alpha zinc fingers"/>
    <property type="match status" value="5"/>
</dbReference>
<dbReference type="PROSITE" id="PS00028">
    <property type="entry name" value="ZINC_FINGER_C2H2_1"/>
    <property type="match status" value="7"/>
</dbReference>
<dbReference type="PROSITE" id="PS50157">
    <property type="entry name" value="ZINC_FINGER_C2H2_2"/>
    <property type="match status" value="9"/>
</dbReference>
<proteinExistence type="evidence at transcript level"/>
<keyword id="KW-0131">Cell cycle</keyword>
<keyword id="KW-0132">Cell division</keyword>
<keyword id="KW-0963">Cytoplasm</keyword>
<keyword id="KW-0238">DNA-binding</keyword>
<keyword id="KW-0341">Growth regulation</keyword>
<keyword id="KW-0479">Metal-binding</keyword>
<keyword id="KW-0498">Mitosis</keyword>
<keyword id="KW-0539">Nucleus</keyword>
<keyword id="KW-1185">Reference proteome</keyword>
<keyword id="KW-0677">Repeat</keyword>
<keyword id="KW-0678">Repressor</keyword>
<keyword id="KW-0804">Transcription</keyword>
<keyword id="KW-0805">Transcription regulation</keyword>
<keyword id="KW-0808">Transferase</keyword>
<keyword id="KW-0833">Ubl conjugation pathway</keyword>
<keyword id="KW-0862">Zinc</keyword>
<keyword id="KW-0863">Zinc-finger</keyword>
<name>E4F1_DANRE</name>
<protein>
    <recommendedName>
        <fullName>Transcription factor E4F1</fullName>
        <ecNumber evidence="2">2.3.2.27</ecNumber>
    </recommendedName>
    <alternativeName>
        <fullName>Putative E3 ubiquitin-protein ligase E4F1</fullName>
    </alternativeName>
    <alternativeName>
        <fullName evidence="5">RING-type E3 ubiquitin transferase E4F1</fullName>
    </alternativeName>
    <alternativeName>
        <fullName>Transcription factor E4F</fullName>
    </alternativeName>
</protein>
<reference key="1">
    <citation type="submission" date="2005-06" db="EMBL/GenBank/DDBJ databases">
        <authorList>
            <consortium name="NIH - Zebrafish Gene Collection (ZGC) project"/>
        </authorList>
    </citation>
    <scope>NUCLEOTIDE SEQUENCE [LARGE SCALE MRNA]</scope>
    <source>
        <tissue>Embryo</tissue>
    </source>
</reference>
<accession>Q4V8R6</accession>